<keyword id="KW-1185">Reference proteome</keyword>
<keyword id="KW-0687">Ribonucleoprotein</keyword>
<keyword id="KW-0689">Ribosomal protein</keyword>
<sequence>MAVISMKQLLEAGVHFGHQTRRWNPKMAKYIFTERNGIHVIDLQQTVKLADQAYEFVRDAAANDAVILFVGTKKQAAEAVADEATRAGQYFINHRWLGGTLTNWGTIQKRITRLKEIKRMEEEGTFEVLPKKEVALLNKQRARLEKFLGGIEDMPRIPDVMYVVDPHKEQIAVKEAKKLGIPVVAMVDTNADPDDIDVIIPANDDAIRAVKLITSKLADAIIEGRQGEDASVEFEADTKADSIEEIVEVVEGDNN</sequence>
<gene>
    <name evidence="1" type="primary">rpsB</name>
    <name type="ordered locus">SUB1754</name>
</gene>
<protein>
    <recommendedName>
        <fullName evidence="1">Small ribosomal subunit protein uS2</fullName>
    </recommendedName>
    <alternativeName>
        <fullName evidence="2">30S ribosomal protein S2</fullName>
    </alternativeName>
</protein>
<organism>
    <name type="scientific">Streptococcus uberis (strain ATCC BAA-854 / 0140J)</name>
    <dbReference type="NCBI Taxonomy" id="218495"/>
    <lineage>
        <taxon>Bacteria</taxon>
        <taxon>Bacillati</taxon>
        <taxon>Bacillota</taxon>
        <taxon>Bacilli</taxon>
        <taxon>Lactobacillales</taxon>
        <taxon>Streptococcaceae</taxon>
        <taxon>Streptococcus</taxon>
    </lineage>
</organism>
<feature type="chain" id="PRO_1000194352" description="Small ribosomal subunit protein uS2">
    <location>
        <begin position="1"/>
        <end position="255"/>
    </location>
</feature>
<evidence type="ECO:0000255" key="1">
    <source>
        <dbReference type="HAMAP-Rule" id="MF_00291"/>
    </source>
</evidence>
<evidence type="ECO:0000305" key="2"/>
<proteinExistence type="inferred from homology"/>
<dbReference type="EMBL" id="AM946015">
    <property type="protein sequence ID" value="CAR43722.1"/>
    <property type="molecule type" value="Genomic_DNA"/>
</dbReference>
<dbReference type="RefSeq" id="WP_015912045.1">
    <property type="nucleotide sequence ID" value="NC_012004.1"/>
</dbReference>
<dbReference type="SMR" id="B9DW41"/>
<dbReference type="STRING" id="218495.SUB1754"/>
<dbReference type="KEGG" id="sub:SUB1754"/>
<dbReference type="eggNOG" id="COG0052">
    <property type="taxonomic scope" value="Bacteria"/>
</dbReference>
<dbReference type="HOGENOM" id="CLU_040318_1_2_9"/>
<dbReference type="OrthoDB" id="9808036at2"/>
<dbReference type="Proteomes" id="UP000000449">
    <property type="component" value="Chromosome"/>
</dbReference>
<dbReference type="GO" id="GO:0022627">
    <property type="term" value="C:cytosolic small ribosomal subunit"/>
    <property type="evidence" value="ECO:0007669"/>
    <property type="project" value="TreeGrafter"/>
</dbReference>
<dbReference type="GO" id="GO:0003735">
    <property type="term" value="F:structural constituent of ribosome"/>
    <property type="evidence" value="ECO:0007669"/>
    <property type="project" value="InterPro"/>
</dbReference>
<dbReference type="GO" id="GO:0006412">
    <property type="term" value="P:translation"/>
    <property type="evidence" value="ECO:0007669"/>
    <property type="project" value="UniProtKB-UniRule"/>
</dbReference>
<dbReference type="CDD" id="cd01425">
    <property type="entry name" value="RPS2"/>
    <property type="match status" value="1"/>
</dbReference>
<dbReference type="FunFam" id="1.10.287.610:FF:000001">
    <property type="entry name" value="30S ribosomal protein S2"/>
    <property type="match status" value="1"/>
</dbReference>
<dbReference type="Gene3D" id="3.40.50.10490">
    <property type="entry name" value="Glucose-6-phosphate isomerase like protein, domain 1"/>
    <property type="match status" value="1"/>
</dbReference>
<dbReference type="Gene3D" id="1.10.287.610">
    <property type="entry name" value="Helix hairpin bin"/>
    <property type="match status" value="1"/>
</dbReference>
<dbReference type="HAMAP" id="MF_00291_B">
    <property type="entry name" value="Ribosomal_uS2_B"/>
    <property type="match status" value="1"/>
</dbReference>
<dbReference type="InterPro" id="IPR001865">
    <property type="entry name" value="Ribosomal_uS2"/>
</dbReference>
<dbReference type="InterPro" id="IPR005706">
    <property type="entry name" value="Ribosomal_uS2_bac/mit/plastid"/>
</dbReference>
<dbReference type="InterPro" id="IPR018130">
    <property type="entry name" value="Ribosomal_uS2_CS"/>
</dbReference>
<dbReference type="InterPro" id="IPR023591">
    <property type="entry name" value="Ribosomal_uS2_flav_dom_sf"/>
</dbReference>
<dbReference type="NCBIfam" id="TIGR01011">
    <property type="entry name" value="rpsB_bact"/>
    <property type="match status" value="1"/>
</dbReference>
<dbReference type="PANTHER" id="PTHR12534">
    <property type="entry name" value="30S RIBOSOMAL PROTEIN S2 PROKARYOTIC AND ORGANELLAR"/>
    <property type="match status" value="1"/>
</dbReference>
<dbReference type="PANTHER" id="PTHR12534:SF0">
    <property type="entry name" value="SMALL RIBOSOMAL SUBUNIT PROTEIN US2M"/>
    <property type="match status" value="1"/>
</dbReference>
<dbReference type="Pfam" id="PF00318">
    <property type="entry name" value="Ribosomal_S2"/>
    <property type="match status" value="1"/>
</dbReference>
<dbReference type="PRINTS" id="PR00395">
    <property type="entry name" value="RIBOSOMALS2"/>
</dbReference>
<dbReference type="SUPFAM" id="SSF52313">
    <property type="entry name" value="Ribosomal protein S2"/>
    <property type="match status" value="1"/>
</dbReference>
<dbReference type="PROSITE" id="PS00962">
    <property type="entry name" value="RIBOSOMAL_S2_1"/>
    <property type="match status" value="1"/>
</dbReference>
<comment type="similarity">
    <text evidence="1">Belongs to the universal ribosomal protein uS2 family.</text>
</comment>
<name>RS2_STRU0</name>
<accession>B9DW41</accession>
<reference key="1">
    <citation type="journal article" date="2009" name="BMC Genomics">
        <title>Evidence for niche adaptation in the genome of the bovine pathogen Streptococcus uberis.</title>
        <authorList>
            <person name="Ward P.N."/>
            <person name="Holden M.T.G."/>
            <person name="Leigh J.A."/>
            <person name="Lennard N."/>
            <person name="Bignell A."/>
            <person name="Barron A."/>
            <person name="Clark L."/>
            <person name="Quail M.A."/>
            <person name="Woodward J."/>
            <person name="Barrell B.G."/>
            <person name="Egan S.A."/>
            <person name="Field T.R."/>
            <person name="Maskell D."/>
            <person name="Kehoe M."/>
            <person name="Dowson C.G."/>
            <person name="Chanter N."/>
            <person name="Whatmore A.M."/>
            <person name="Bentley S.D."/>
            <person name="Parkhill J."/>
        </authorList>
    </citation>
    <scope>NUCLEOTIDE SEQUENCE [LARGE SCALE GENOMIC DNA]</scope>
    <source>
        <strain>ATCC BAA-854 / 0140J</strain>
    </source>
</reference>